<organism>
    <name type="scientific">Dictyostelium discoideum</name>
    <name type="common">Social amoeba</name>
    <dbReference type="NCBI Taxonomy" id="44689"/>
    <lineage>
        <taxon>Eukaryota</taxon>
        <taxon>Amoebozoa</taxon>
        <taxon>Evosea</taxon>
        <taxon>Eumycetozoa</taxon>
        <taxon>Dictyostelia</taxon>
        <taxon>Dictyosteliales</taxon>
        <taxon>Dictyosteliaceae</taxon>
        <taxon>Dictyostelium</taxon>
    </lineage>
</organism>
<keyword id="KW-0320">Glycogen biosynthesis</keyword>
<keyword id="KW-0328">Glycosyltransferase</keyword>
<keyword id="KW-1185">Reference proteome</keyword>
<keyword id="KW-0808">Transferase</keyword>
<gene>
    <name type="primary">glcS</name>
    <name type="ORF">DDB_G0267674</name>
</gene>
<dbReference type="EC" id="2.4.1.11" evidence="3"/>
<dbReference type="EMBL" id="AAFI02000003">
    <property type="protein sequence ID" value="EAL73290.1"/>
    <property type="molecule type" value="Genomic_DNA"/>
</dbReference>
<dbReference type="RefSeq" id="XP_647210.1">
    <property type="nucleotide sequence ID" value="XM_642118.1"/>
</dbReference>
<dbReference type="SMR" id="Q55GH4"/>
<dbReference type="FunCoup" id="Q55GH4">
    <property type="interactions" value="164"/>
</dbReference>
<dbReference type="STRING" id="44689.Q55GH4"/>
<dbReference type="GlyGen" id="Q55GH4">
    <property type="glycosylation" value="3 sites"/>
</dbReference>
<dbReference type="PaxDb" id="44689-DDB0231962"/>
<dbReference type="EnsemblProtists" id="EAL73290">
    <property type="protein sequence ID" value="EAL73290"/>
    <property type="gene ID" value="DDB_G0267674"/>
</dbReference>
<dbReference type="GeneID" id="8616014"/>
<dbReference type="KEGG" id="ddi:DDB_G0267674"/>
<dbReference type="dictyBase" id="DDB_G0267674">
    <property type="gene designation" value="glcS"/>
</dbReference>
<dbReference type="VEuPathDB" id="AmoebaDB:DDB_G0267674"/>
<dbReference type="eggNOG" id="KOG3742">
    <property type="taxonomic scope" value="Eukaryota"/>
</dbReference>
<dbReference type="HOGENOM" id="CLU_015910_1_0_1"/>
<dbReference type="InParanoid" id="Q55GH4"/>
<dbReference type="OMA" id="RDVRNHI"/>
<dbReference type="PhylomeDB" id="Q55GH4"/>
<dbReference type="Reactome" id="R-DDI-3322077">
    <property type="pathway name" value="Glycogen synthesis"/>
</dbReference>
<dbReference type="UniPathway" id="UPA00164"/>
<dbReference type="PRO" id="PR:Q55GH4"/>
<dbReference type="Proteomes" id="UP000002195">
    <property type="component" value="Chromosome 1"/>
</dbReference>
<dbReference type="GO" id="GO:0005737">
    <property type="term" value="C:cytoplasm"/>
    <property type="evidence" value="ECO:0000318"/>
    <property type="project" value="GO_Central"/>
</dbReference>
<dbReference type="GO" id="GO:0004373">
    <property type="term" value="F:alpha-1,4-glucan glucosyltransferase (UDP-glucose donor) activity"/>
    <property type="evidence" value="ECO:0000314"/>
    <property type="project" value="dictyBase"/>
</dbReference>
<dbReference type="GO" id="GO:0000045">
    <property type="term" value="P:autophagosome assembly"/>
    <property type="evidence" value="ECO:0000315"/>
    <property type="project" value="dictyBase"/>
</dbReference>
<dbReference type="GO" id="GO:0005978">
    <property type="term" value="P:glycogen biosynthetic process"/>
    <property type="evidence" value="ECO:0000314"/>
    <property type="project" value="dictyBase"/>
</dbReference>
<dbReference type="GO" id="GO:0031288">
    <property type="term" value="P:sorocarp morphogenesis"/>
    <property type="evidence" value="ECO:0000315"/>
    <property type="project" value="dictyBase"/>
</dbReference>
<dbReference type="CDD" id="cd03793">
    <property type="entry name" value="GT3_GSY2-like"/>
    <property type="match status" value="1"/>
</dbReference>
<dbReference type="Gene3D" id="6.10.260.10">
    <property type="match status" value="1"/>
</dbReference>
<dbReference type="Gene3D" id="3.40.50.2000">
    <property type="entry name" value="Glycogen Phosphorylase B"/>
    <property type="match status" value="2"/>
</dbReference>
<dbReference type="InterPro" id="IPR008631">
    <property type="entry name" value="Glycogen_synth"/>
</dbReference>
<dbReference type="PANTHER" id="PTHR10176:SF3">
    <property type="entry name" value="GLYCOGEN [STARCH] SYNTHASE"/>
    <property type="match status" value="1"/>
</dbReference>
<dbReference type="PANTHER" id="PTHR10176">
    <property type="entry name" value="GLYCOGEN SYNTHASE"/>
    <property type="match status" value="1"/>
</dbReference>
<dbReference type="Pfam" id="PF05693">
    <property type="entry name" value="Glycogen_syn"/>
    <property type="match status" value="1"/>
</dbReference>
<dbReference type="SUPFAM" id="SSF53756">
    <property type="entry name" value="UDP-Glycosyltransferase/glycogen phosphorylase"/>
    <property type="match status" value="2"/>
</dbReference>
<proteinExistence type="evidence at protein level"/>
<protein>
    <recommendedName>
        <fullName>Glycogen [starch] synthase</fullName>
        <ecNumber evidence="3">2.4.1.11</ecNumber>
    </recommendedName>
</protein>
<name>GYS_DICDI</name>
<feature type="chain" id="PRO_0000355639" description="Glycogen [starch] synthase">
    <location>
        <begin position="1"/>
        <end position="878"/>
    </location>
</feature>
<feature type="region of interest" description="Disordered" evidence="2">
    <location>
        <begin position="637"/>
        <end position="721"/>
    </location>
</feature>
<feature type="region of interest" description="Disordered" evidence="2">
    <location>
        <begin position="746"/>
        <end position="878"/>
    </location>
</feature>
<feature type="compositionally biased region" description="Low complexity" evidence="2">
    <location>
        <begin position="641"/>
        <end position="656"/>
    </location>
</feature>
<feature type="compositionally biased region" description="Low complexity" evidence="2">
    <location>
        <begin position="666"/>
        <end position="676"/>
    </location>
</feature>
<feature type="compositionally biased region" description="Polar residues" evidence="2">
    <location>
        <begin position="677"/>
        <end position="692"/>
    </location>
</feature>
<feature type="compositionally biased region" description="Low complexity" evidence="2">
    <location>
        <begin position="693"/>
        <end position="715"/>
    </location>
</feature>
<feature type="compositionally biased region" description="Low complexity" evidence="2">
    <location>
        <begin position="746"/>
        <end position="781"/>
    </location>
</feature>
<feature type="compositionally biased region" description="Low complexity" evidence="2">
    <location>
        <begin position="795"/>
        <end position="830"/>
    </location>
</feature>
<feature type="compositionally biased region" description="Low complexity" evidence="2">
    <location>
        <begin position="838"/>
        <end position="878"/>
    </location>
</feature>
<feature type="binding site" evidence="1">
    <location>
        <position position="61"/>
    </location>
    <ligand>
        <name>UDP-alpha-D-glucose</name>
        <dbReference type="ChEBI" id="CHEBI:58885"/>
    </ligand>
</feature>
<reference key="1">
    <citation type="journal article" date="1996" name="Dev. Genet.">
        <title>Isolation and characterization of glycogen synthase in Dictyostelium discoideum.</title>
        <authorList>
            <person name="Williamson B.D."/>
            <person name="Favis R."/>
            <person name="Brickey D.A."/>
            <person name="Rutherford C.L."/>
        </authorList>
    </citation>
    <scope>PRELIMINARY NUCLEOTIDE SEQUENCE [GENOMIC DNA]</scope>
    <scope>FUNCTION</scope>
    <scope>CATALYTIC ACTIVITY</scope>
    <scope>PATHWAY</scope>
    <scope>BIOPHYSICOCHEMICAL PROPERTIES</scope>
</reference>
<reference evidence="6" key="2">
    <citation type="journal article" date="2005" name="Nature">
        <title>The genome of the social amoeba Dictyostelium discoideum.</title>
        <authorList>
            <person name="Eichinger L."/>
            <person name="Pachebat J.A."/>
            <person name="Gloeckner G."/>
            <person name="Rajandream M.A."/>
            <person name="Sucgang R."/>
            <person name="Berriman M."/>
            <person name="Song J."/>
            <person name="Olsen R."/>
            <person name="Szafranski K."/>
            <person name="Xu Q."/>
            <person name="Tunggal B."/>
            <person name="Kummerfeld S."/>
            <person name="Madera M."/>
            <person name="Konfortov B.A."/>
            <person name="Rivero F."/>
            <person name="Bankier A.T."/>
            <person name="Lehmann R."/>
            <person name="Hamlin N."/>
            <person name="Davies R."/>
            <person name="Gaudet P."/>
            <person name="Fey P."/>
            <person name="Pilcher K."/>
            <person name="Chen G."/>
            <person name="Saunders D."/>
            <person name="Sodergren E.J."/>
            <person name="Davis P."/>
            <person name="Kerhornou A."/>
            <person name="Nie X."/>
            <person name="Hall N."/>
            <person name="Anjard C."/>
            <person name="Hemphill L."/>
            <person name="Bason N."/>
            <person name="Farbrother P."/>
            <person name="Desany B."/>
            <person name="Just E."/>
            <person name="Morio T."/>
            <person name="Rost R."/>
            <person name="Churcher C.M."/>
            <person name="Cooper J."/>
            <person name="Haydock S."/>
            <person name="van Driessche N."/>
            <person name="Cronin A."/>
            <person name="Goodhead I."/>
            <person name="Muzny D.M."/>
            <person name="Mourier T."/>
            <person name="Pain A."/>
            <person name="Lu M."/>
            <person name="Harper D."/>
            <person name="Lindsay R."/>
            <person name="Hauser H."/>
            <person name="James K.D."/>
            <person name="Quiles M."/>
            <person name="Madan Babu M."/>
            <person name="Saito T."/>
            <person name="Buchrieser C."/>
            <person name="Wardroper A."/>
            <person name="Felder M."/>
            <person name="Thangavelu M."/>
            <person name="Johnson D."/>
            <person name="Knights A."/>
            <person name="Loulseged H."/>
            <person name="Mungall K.L."/>
            <person name="Oliver K."/>
            <person name="Price C."/>
            <person name="Quail M.A."/>
            <person name="Urushihara H."/>
            <person name="Hernandez J."/>
            <person name="Rabbinowitsch E."/>
            <person name="Steffen D."/>
            <person name="Sanders M."/>
            <person name="Ma J."/>
            <person name="Kohara Y."/>
            <person name="Sharp S."/>
            <person name="Simmonds M.N."/>
            <person name="Spiegler S."/>
            <person name="Tivey A."/>
            <person name="Sugano S."/>
            <person name="White B."/>
            <person name="Walker D."/>
            <person name="Woodward J.R."/>
            <person name="Winckler T."/>
            <person name="Tanaka Y."/>
            <person name="Shaulsky G."/>
            <person name="Schleicher M."/>
            <person name="Weinstock G.M."/>
            <person name="Rosenthal A."/>
            <person name="Cox E.C."/>
            <person name="Chisholm R.L."/>
            <person name="Gibbs R.A."/>
            <person name="Loomis W.F."/>
            <person name="Platzer M."/>
            <person name="Kay R.R."/>
            <person name="Williams J.G."/>
            <person name="Dear P.H."/>
            <person name="Noegel A.A."/>
            <person name="Barrell B.G."/>
            <person name="Kuspa A."/>
        </authorList>
    </citation>
    <scope>NUCLEOTIDE SEQUENCE [LARGE SCALE GENOMIC DNA]</scope>
    <source>
        <strain>AX4</strain>
    </source>
</reference>
<comment type="function">
    <text evidence="3">Catalyzes the formation of apha-1,4 glycosidic bonds adding glucose residue from UDPG to the growing chain of glycogen.</text>
</comment>
<comment type="catalytic activity">
    <reaction evidence="3">
        <text>[(1-&gt;4)-alpha-D-glucosyl](n) + UDP-alpha-D-glucose = [(1-&gt;4)-alpha-D-glucosyl](n+1) + UDP + H(+)</text>
        <dbReference type="Rhea" id="RHEA:18549"/>
        <dbReference type="Rhea" id="RHEA-COMP:9584"/>
        <dbReference type="Rhea" id="RHEA-COMP:9587"/>
        <dbReference type="ChEBI" id="CHEBI:15378"/>
        <dbReference type="ChEBI" id="CHEBI:15444"/>
        <dbReference type="ChEBI" id="CHEBI:58223"/>
        <dbReference type="ChEBI" id="CHEBI:58885"/>
        <dbReference type="EC" id="2.4.1.11"/>
    </reaction>
    <physiologicalReaction direction="left-to-right" evidence="3">
        <dbReference type="Rhea" id="RHEA:18550"/>
    </physiologicalReaction>
</comment>
<comment type="biophysicochemical properties">
    <phDependence>
        <text evidence="3">Optimum pH is between 7.5 and 8.0.</text>
    </phDependence>
</comment>
<comment type="pathway">
    <text evidence="5">Glycan biosynthesis; glycogen biosynthesis.</text>
</comment>
<comment type="similarity">
    <text evidence="4">Belongs to the glycosyltransferase 3 family.</text>
</comment>
<evidence type="ECO:0000250" key="1"/>
<evidence type="ECO:0000256" key="2">
    <source>
        <dbReference type="SAM" id="MobiDB-lite"/>
    </source>
</evidence>
<evidence type="ECO:0000269" key="3">
    <source>
    </source>
</evidence>
<evidence type="ECO:0000305" key="4"/>
<evidence type="ECO:0000305" key="5">
    <source>
    </source>
</evidence>
<evidence type="ECO:0000312" key="6">
    <source>
        <dbReference type="EMBL" id="EAL73290.1"/>
    </source>
</evidence>
<accession>Q55GH4</accession>
<sequence>MIFGTPNSTFLENRLGSSTGMPFSSATSLNSGVDQMMNELNIQQPTSHTVLFDLSWEVAKKVGGIYTVLKTKAPVTVEEYKSRYALIGPYNASTAPTEFEPLIPGPLSSPIIENMMKKYGIHVHFGKWLVEGYPKVFLIDLHSSMHKLGEWRWDLMSGFEQAGDNETNETIVFGYQSALLLKEFAEANPNDKYIAHFHEWQASVGLILLKKWKVPVSTIFTTHATLLGRYLAAGGVDLYNQMQVLNMDFEASKRGIYHRHWIEKKSAADSHVFTTVSEITGYESEHILMRKPDVILPNGLKLDKFTALHEFQNLHAKYKGVLNEFVRGHFYGHYSDFDLDNTLYVFTAGRHEYFNKGVDMFLDSLAGLNKLLQQSGSKMTVVAFIIMPAATNNFNVESLKGHSYLKDMRRTCNTIVEAMGERLFEATSRGKMISPEELLSQEDLVMLKRRIFALKQKSSGPPVVTHNMINDNDEILQHIRRIKLFNSQEDRVKVIYHPEFLTSTNPLIPLDYTEFVRGCHLGIFPSYYEPFGMTPAECCASGCPSITSNLTGFANYMSRALQDTDSKGIFIVDRRFKSSRETVDQMTQYLWKFTQLDRRQRIELRNATEKLSELLDWRTLGKFYKTARALALERAFPPKPISRSPSPSPSSSLKLSTGLSNQIELQQQQQQQQPQPIGTTINLIPPSSNVSVTPTTTPTTTTTATTATTAPITTPKPNVIPINTGKENITLLSPNSMSSLLSDSLNEFKKQQQQQQQSKTPTTPTTTSTTTTTPSTTAAATNKSVLSNPTPTPSPNTSSFIPTNKGSTATTTTTTATPTPTPSNNTNGKPFNPIEALTKSNSSSNFATTSTASVNTNNGGTNSPVSKSIPIPSSKSLK</sequence>